<comment type="function">
    <text evidence="1">Catalyzes the conversion of dihydroorotate to orotate with quinone as electron acceptor.</text>
</comment>
<comment type="catalytic activity">
    <reaction>
        <text>(S)-dihydroorotate + a quinone = orotate + a quinol</text>
        <dbReference type="Rhea" id="RHEA:30187"/>
        <dbReference type="ChEBI" id="CHEBI:24646"/>
        <dbReference type="ChEBI" id="CHEBI:30839"/>
        <dbReference type="ChEBI" id="CHEBI:30864"/>
        <dbReference type="ChEBI" id="CHEBI:132124"/>
        <dbReference type="EC" id="1.3.5.2"/>
    </reaction>
</comment>
<comment type="cofactor">
    <cofactor evidence="1">
        <name>FMN</name>
        <dbReference type="ChEBI" id="CHEBI:58210"/>
    </cofactor>
    <text evidence="1">Binds 1 FMN per subunit.</text>
</comment>
<comment type="pathway">
    <text>Pyrimidine metabolism; UMP biosynthesis via de novo pathway; orotate from (S)-dihydroorotate (quinone route): step 1/1.</text>
</comment>
<comment type="subunit">
    <text evidence="1">Monomer.</text>
</comment>
<comment type="subcellular location">
    <subcellularLocation>
        <location evidence="1">Cell membrane</location>
        <topology evidence="1">Peripheral membrane protein</topology>
    </subcellularLocation>
</comment>
<comment type="miscellaneous">
    <text>Was identified as a high-confidence drug target.</text>
</comment>
<comment type="similarity">
    <text evidence="2">Belongs to the dihydroorotate dehydrogenase family. Type 2 subfamily.</text>
</comment>
<name>PYRD_MYCTU</name>
<reference key="1">
    <citation type="journal article" date="1998" name="Nature">
        <title>Deciphering the biology of Mycobacterium tuberculosis from the complete genome sequence.</title>
        <authorList>
            <person name="Cole S.T."/>
            <person name="Brosch R."/>
            <person name="Parkhill J."/>
            <person name="Garnier T."/>
            <person name="Churcher C.M."/>
            <person name="Harris D.E."/>
            <person name="Gordon S.V."/>
            <person name="Eiglmeier K."/>
            <person name="Gas S."/>
            <person name="Barry C.E. III"/>
            <person name="Tekaia F."/>
            <person name="Badcock K."/>
            <person name="Basham D."/>
            <person name="Brown D."/>
            <person name="Chillingworth T."/>
            <person name="Connor R."/>
            <person name="Davies R.M."/>
            <person name="Devlin K."/>
            <person name="Feltwell T."/>
            <person name="Gentles S."/>
            <person name="Hamlin N."/>
            <person name="Holroyd S."/>
            <person name="Hornsby T."/>
            <person name="Jagels K."/>
            <person name="Krogh A."/>
            <person name="McLean J."/>
            <person name="Moule S."/>
            <person name="Murphy L.D."/>
            <person name="Oliver S."/>
            <person name="Osborne J."/>
            <person name="Quail M.A."/>
            <person name="Rajandream M.A."/>
            <person name="Rogers J."/>
            <person name="Rutter S."/>
            <person name="Seeger K."/>
            <person name="Skelton S."/>
            <person name="Squares S."/>
            <person name="Squares R."/>
            <person name="Sulston J.E."/>
            <person name="Taylor K."/>
            <person name="Whitehead S."/>
            <person name="Barrell B.G."/>
        </authorList>
    </citation>
    <scope>NUCLEOTIDE SEQUENCE [LARGE SCALE GENOMIC DNA]</scope>
    <source>
        <strain>ATCC 25618 / H37Rv</strain>
    </source>
</reference>
<reference key="2">
    <citation type="journal article" date="2008" name="BMC Syst. Biol.">
        <title>targetTB: a target identification pipeline for Mycobacterium tuberculosis through an interactome, reactome and genome-scale structural analysis.</title>
        <authorList>
            <person name="Raman K."/>
            <person name="Yeturu K."/>
            <person name="Chandra N."/>
        </authorList>
    </citation>
    <scope>IDENTIFICATION AS A DRUG TARGET [LARGE SCALE ANALYSIS]</scope>
</reference>
<reference key="3">
    <citation type="journal article" date="2011" name="Mol. Cell. Proteomics">
        <title>Proteogenomic analysis of Mycobacterium tuberculosis by high resolution mass spectrometry.</title>
        <authorList>
            <person name="Kelkar D.S."/>
            <person name="Kumar D."/>
            <person name="Kumar P."/>
            <person name="Balakrishnan L."/>
            <person name="Muthusamy B."/>
            <person name="Yadav A.K."/>
            <person name="Shrivastava P."/>
            <person name="Marimuthu A."/>
            <person name="Anand S."/>
            <person name="Sundaram H."/>
            <person name="Kingsbury R."/>
            <person name="Harsha H.C."/>
            <person name="Nair B."/>
            <person name="Prasad T.S."/>
            <person name="Chauhan D.S."/>
            <person name="Katoch K."/>
            <person name="Katoch V.M."/>
            <person name="Kumar P."/>
            <person name="Chaerkady R."/>
            <person name="Ramachandran S."/>
            <person name="Dash D."/>
            <person name="Pandey A."/>
        </authorList>
    </citation>
    <scope>IDENTIFICATION BY MASS SPECTROMETRY [LARGE SCALE ANALYSIS]</scope>
    <source>
        <strain>ATCC 25618 / H37Rv</strain>
    </source>
</reference>
<accession>P9WHL1</accession>
<accession>L0T8R3</accession>
<accession>O06236</accession>
<accession>P65908</accession>
<keyword id="KW-0002">3D-structure</keyword>
<keyword id="KW-1003">Cell membrane</keyword>
<keyword id="KW-0285">Flavoprotein</keyword>
<keyword id="KW-0288">FMN</keyword>
<keyword id="KW-0472">Membrane</keyword>
<keyword id="KW-0560">Oxidoreductase</keyword>
<keyword id="KW-0665">Pyrimidine biosynthesis</keyword>
<keyword id="KW-1185">Reference proteome</keyword>
<protein>
    <recommendedName>
        <fullName>Dihydroorotate dehydrogenase (quinone)</fullName>
        <ecNumber>1.3.5.2</ecNumber>
    </recommendedName>
    <alternativeName>
        <fullName>DHOdehase</fullName>
        <shortName>DHOD</shortName>
        <shortName>DHODase</shortName>
    </alternativeName>
    <alternativeName>
        <fullName>Dihydroorotate oxidase</fullName>
    </alternativeName>
</protein>
<proteinExistence type="evidence at protein level"/>
<evidence type="ECO:0000250" key="1"/>
<evidence type="ECO:0000305" key="2"/>
<evidence type="ECO:0007829" key="3">
    <source>
        <dbReference type="PDB" id="4XQ6"/>
    </source>
</evidence>
<organism>
    <name type="scientific">Mycobacterium tuberculosis (strain ATCC 25618 / H37Rv)</name>
    <dbReference type="NCBI Taxonomy" id="83332"/>
    <lineage>
        <taxon>Bacteria</taxon>
        <taxon>Bacillati</taxon>
        <taxon>Actinomycetota</taxon>
        <taxon>Actinomycetes</taxon>
        <taxon>Mycobacteriales</taxon>
        <taxon>Mycobacteriaceae</taxon>
        <taxon>Mycobacterium</taxon>
        <taxon>Mycobacterium tuberculosis complex</taxon>
    </lineage>
</organism>
<gene>
    <name type="primary">pyrD</name>
    <name type="ordered locus">Rv2139</name>
    <name type="ORF">MTCY270.29c</name>
</gene>
<sequence>MYPLVRRLLFLIPPEHAHKLVFAVLRGVAAVAPVRRLLRRLLGPTDPVLASTVFGVRFPAPLGLAAGFDKDGTALSSWGAMGFGYAEIGTVTAHPQPGNPAPRLFRLADDRALLNRMGFNNHGARALAIRLARHRPEIPIGVNIGKTKKTPAGDAVNDYRASARMVGPLASYLVVNVSSPNTPGLRDLQAVESLRPILSAVRAETSTPVLVKIAPDLSDSDLDDIADLAVELDLAGIVATNTTVSRDGLTTPGVDRLGPGGISGPPLAQRAVQVLRRLYDRVGDRLALISVGGIETADDAWERITAGASLLQGYTGFIYGGERWAKDIHEGIARRLHDGGFGSLHEAVGSARRRQPS</sequence>
<feature type="chain" id="PRO_0000148457" description="Dihydroorotate dehydrogenase (quinone)">
    <location>
        <begin position="1"/>
        <end position="357"/>
    </location>
</feature>
<feature type="active site" description="Nucleophile" evidence="1">
    <location>
        <position position="179"/>
    </location>
</feature>
<feature type="binding site" evidence="1">
    <location>
        <begin position="66"/>
        <end position="70"/>
    </location>
    <ligand>
        <name>FMN</name>
        <dbReference type="ChEBI" id="CHEBI:58210"/>
    </ligand>
</feature>
<feature type="binding site" evidence="1">
    <location>
        <position position="70"/>
    </location>
    <ligand>
        <name>substrate</name>
    </ligand>
</feature>
<feature type="binding site" evidence="1">
    <location>
        <position position="90"/>
    </location>
    <ligand>
        <name>FMN</name>
        <dbReference type="ChEBI" id="CHEBI:58210"/>
    </ligand>
</feature>
<feature type="binding site" evidence="1">
    <location>
        <begin position="115"/>
        <end position="119"/>
    </location>
    <ligand>
        <name>substrate</name>
    </ligand>
</feature>
<feature type="binding site" evidence="1">
    <location>
        <position position="143"/>
    </location>
    <ligand>
        <name>FMN</name>
        <dbReference type="ChEBI" id="CHEBI:58210"/>
    </ligand>
</feature>
<feature type="binding site" evidence="1">
    <location>
        <position position="176"/>
    </location>
    <ligand>
        <name>FMN</name>
        <dbReference type="ChEBI" id="CHEBI:58210"/>
    </ligand>
</feature>
<feature type="binding site" evidence="1">
    <location>
        <position position="176"/>
    </location>
    <ligand>
        <name>substrate</name>
    </ligand>
</feature>
<feature type="binding site" evidence="1">
    <location>
        <position position="181"/>
    </location>
    <ligand>
        <name>substrate</name>
    </ligand>
</feature>
<feature type="binding site" evidence="1">
    <location>
        <position position="212"/>
    </location>
    <ligand>
        <name>FMN</name>
        <dbReference type="ChEBI" id="CHEBI:58210"/>
    </ligand>
</feature>
<feature type="binding site" evidence="1">
    <location>
        <position position="240"/>
    </location>
    <ligand>
        <name>FMN</name>
        <dbReference type="ChEBI" id="CHEBI:58210"/>
    </ligand>
</feature>
<feature type="binding site" evidence="1">
    <location>
        <begin position="241"/>
        <end position="242"/>
    </location>
    <ligand>
        <name>substrate</name>
    </ligand>
</feature>
<feature type="binding site" evidence="1">
    <location>
        <position position="264"/>
    </location>
    <ligand>
        <name>FMN</name>
        <dbReference type="ChEBI" id="CHEBI:58210"/>
    </ligand>
</feature>
<feature type="binding site" evidence="1">
    <location>
        <position position="293"/>
    </location>
    <ligand>
        <name>FMN</name>
        <dbReference type="ChEBI" id="CHEBI:58210"/>
    </ligand>
</feature>
<feature type="binding site" evidence="1">
    <location>
        <begin position="314"/>
        <end position="315"/>
    </location>
    <ligand>
        <name>FMN</name>
        <dbReference type="ChEBI" id="CHEBI:58210"/>
    </ligand>
</feature>
<feature type="helix" evidence="3">
    <location>
        <begin position="32"/>
        <end position="42"/>
    </location>
</feature>
<feature type="helix" evidence="3">
    <location>
        <begin position="47"/>
        <end position="49"/>
    </location>
</feature>
<feature type="strand" evidence="3">
    <location>
        <begin position="51"/>
        <end position="53"/>
    </location>
</feature>
<feature type="strand" evidence="3">
    <location>
        <begin position="56"/>
        <end position="64"/>
    </location>
</feature>
<feature type="strand" evidence="3">
    <location>
        <begin position="68"/>
        <end position="74"/>
    </location>
</feature>
<feature type="helix" evidence="3">
    <location>
        <begin position="75"/>
        <end position="77"/>
    </location>
</feature>
<feature type="turn" evidence="3">
    <location>
        <begin position="78"/>
        <end position="82"/>
    </location>
</feature>
<feature type="strand" evidence="3">
    <location>
        <begin position="86"/>
        <end position="94"/>
    </location>
</feature>
<feature type="strand" evidence="3">
    <location>
        <begin position="105"/>
        <end position="107"/>
    </location>
</feature>
<feature type="helix" evidence="3">
    <location>
        <begin position="108"/>
        <end position="110"/>
    </location>
</feature>
<feature type="strand" evidence="3">
    <location>
        <begin position="112"/>
        <end position="115"/>
    </location>
</feature>
<feature type="helix" evidence="3">
    <location>
        <begin position="124"/>
        <end position="132"/>
    </location>
</feature>
<feature type="strand" evidence="3">
    <location>
        <begin position="140"/>
        <end position="145"/>
    </location>
</feature>
<feature type="helix" evidence="3">
    <location>
        <begin position="152"/>
        <end position="154"/>
    </location>
</feature>
<feature type="helix" evidence="3">
    <location>
        <begin position="155"/>
        <end position="166"/>
    </location>
</feature>
<feature type="turn" evidence="3">
    <location>
        <begin position="167"/>
        <end position="169"/>
    </location>
</feature>
<feature type="strand" evidence="3">
    <location>
        <begin position="171"/>
        <end position="176"/>
    </location>
</feature>
<feature type="helix" evidence="3">
    <location>
        <begin position="185"/>
        <end position="189"/>
    </location>
</feature>
<feature type="helix" evidence="3">
    <location>
        <begin position="191"/>
        <end position="204"/>
    </location>
</feature>
<feature type="strand" evidence="3">
    <location>
        <begin position="209"/>
        <end position="213"/>
    </location>
</feature>
<feature type="helix" evidence="3">
    <location>
        <begin position="219"/>
        <end position="231"/>
    </location>
</feature>
<feature type="strand" evidence="3">
    <location>
        <begin position="236"/>
        <end position="239"/>
    </location>
</feature>
<feature type="strand" evidence="3">
    <location>
        <begin position="261"/>
        <end position="264"/>
    </location>
</feature>
<feature type="helix" evidence="3">
    <location>
        <begin position="265"/>
        <end position="267"/>
    </location>
</feature>
<feature type="helix" evidence="3">
    <location>
        <begin position="268"/>
        <end position="282"/>
    </location>
</feature>
<feature type="turn" evidence="3">
    <location>
        <begin position="283"/>
        <end position="285"/>
    </location>
</feature>
<feature type="strand" evidence="3">
    <location>
        <begin position="286"/>
        <end position="293"/>
    </location>
</feature>
<feature type="helix" evidence="3">
    <location>
        <begin position="297"/>
        <end position="305"/>
    </location>
</feature>
<feature type="strand" evidence="3">
    <location>
        <begin position="309"/>
        <end position="314"/>
    </location>
</feature>
<feature type="helix" evidence="3">
    <location>
        <begin position="315"/>
        <end position="320"/>
    </location>
</feature>
<feature type="helix" evidence="3">
    <location>
        <begin position="323"/>
        <end position="338"/>
    </location>
</feature>
<feature type="helix" evidence="3">
    <location>
        <begin position="344"/>
        <end position="347"/>
    </location>
</feature>
<feature type="helix" evidence="3">
    <location>
        <begin position="350"/>
        <end position="352"/>
    </location>
</feature>
<dbReference type="EC" id="1.3.5.2"/>
<dbReference type="EMBL" id="AL123456">
    <property type="protein sequence ID" value="CCP44914.1"/>
    <property type="molecule type" value="Genomic_DNA"/>
</dbReference>
<dbReference type="PIR" id="G70577">
    <property type="entry name" value="G70577"/>
</dbReference>
<dbReference type="RefSeq" id="NP_216655.1">
    <property type="nucleotide sequence ID" value="NC_000962.3"/>
</dbReference>
<dbReference type="RefSeq" id="WP_003411116.1">
    <property type="nucleotide sequence ID" value="NZ_NVQJ01000044.1"/>
</dbReference>
<dbReference type="PDB" id="4XQ6">
    <property type="method" value="X-ray"/>
    <property type="resolution" value="2.00 A"/>
    <property type="chains" value="A/B=31-353"/>
</dbReference>
<dbReference type="PDB" id="8OFW">
    <property type="method" value="X-ray"/>
    <property type="resolution" value="3.80 A"/>
    <property type="chains" value="A/B=1-357"/>
</dbReference>
<dbReference type="PDBsum" id="4XQ6"/>
<dbReference type="PDBsum" id="8OFW"/>
<dbReference type="SMR" id="P9WHL1"/>
<dbReference type="FunCoup" id="P9WHL1">
    <property type="interactions" value="419"/>
</dbReference>
<dbReference type="STRING" id="83332.Rv2139"/>
<dbReference type="PaxDb" id="83332-Rv2139"/>
<dbReference type="DNASU" id="887326"/>
<dbReference type="GeneID" id="887326"/>
<dbReference type="KEGG" id="mtu:Rv2139"/>
<dbReference type="KEGG" id="mtv:RVBD_2139"/>
<dbReference type="TubercuList" id="Rv2139"/>
<dbReference type="eggNOG" id="COG0167">
    <property type="taxonomic scope" value="Bacteria"/>
</dbReference>
<dbReference type="InParanoid" id="P9WHL1"/>
<dbReference type="OrthoDB" id="9802377at2"/>
<dbReference type="PhylomeDB" id="P9WHL1"/>
<dbReference type="UniPathway" id="UPA00070">
    <property type="reaction ID" value="UER00946"/>
</dbReference>
<dbReference type="EvolutionaryTrace" id="P9WHL1"/>
<dbReference type="Proteomes" id="UP000001584">
    <property type="component" value="Chromosome"/>
</dbReference>
<dbReference type="GO" id="GO:0005737">
    <property type="term" value="C:cytoplasm"/>
    <property type="evidence" value="ECO:0007669"/>
    <property type="project" value="InterPro"/>
</dbReference>
<dbReference type="GO" id="GO:0005886">
    <property type="term" value="C:plasma membrane"/>
    <property type="evidence" value="ECO:0007005"/>
    <property type="project" value="MTBBASE"/>
</dbReference>
<dbReference type="GO" id="GO:0106430">
    <property type="term" value="F:dihydroorotate dehydrogenase (quinone) activity"/>
    <property type="evidence" value="ECO:0007669"/>
    <property type="project" value="UniProtKB-EC"/>
</dbReference>
<dbReference type="GO" id="GO:0004152">
    <property type="term" value="F:dihydroorotate dehydrogenase activity"/>
    <property type="evidence" value="ECO:0000318"/>
    <property type="project" value="GO_Central"/>
</dbReference>
<dbReference type="GO" id="GO:0006207">
    <property type="term" value="P:'de novo' pyrimidine nucleobase biosynthetic process"/>
    <property type="evidence" value="ECO:0000318"/>
    <property type="project" value="GO_Central"/>
</dbReference>
<dbReference type="GO" id="GO:0044205">
    <property type="term" value="P:'de novo' UMP biosynthetic process"/>
    <property type="evidence" value="ECO:0007669"/>
    <property type="project" value="UniProtKB-UniRule"/>
</dbReference>
<dbReference type="GO" id="GO:0009220">
    <property type="term" value="P:pyrimidine ribonucleotide biosynthetic process"/>
    <property type="evidence" value="ECO:0000318"/>
    <property type="project" value="GO_Central"/>
</dbReference>
<dbReference type="CDD" id="cd04738">
    <property type="entry name" value="DHOD_2_like"/>
    <property type="match status" value="1"/>
</dbReference>
<dbReference type="FunFam" id="3.20.20.70:FF:000123">
    <property type="entry name" value="Dihydroorotate dehydrogenase (quinone)"/>
    <property type="match status" value="1"/>
</dbReference>
<dbReference type="Gene3D" id="3.20.20.70">
    <property type="entry name" value="Aldolase class I"/>
    <property type="match status" value="1"/>
</dbReference>
<dbReference type="HAMAP" id="MF_00225">
    <property type="entry name" value="DHO_dh_type2"/>
    <property type="match status" value="1"/>
</dbReference>
<dbReference type="InterPro" id="IPR013785">
    <property type="entry name" value="Aldolase_TIM"/>
</dbReference>
<dbReference type="InterPro" id="IPR050074">
    <property type="entry name" value="DHO_dehydrogenase"/>
</dbReference>
<dbReference type="InterPro" id="IPR005719">
    <property type="entry name" value="Dihydroorotate_DH_2"/>
</dbReference>
<dbReference type="InterPro" id="IPR005720">
    <property type="entry name" value="Dihydroorotate_DH_cat"/>
</dbReference>
<dbReference type="InterPro" id="IPR001295">
    <property type="entry name" value="Dihydroorotate_DH_CS"/>
</dbReference>
<dbReference type="NCBIfam" id="NF003645">
    <property type="entry name" value="PRK05286.1-2"/>
    <property type="match status" value="1"/>
</dbReference>
<dbReference type="NCBIfam" id="NF003648">
    <property type="entry name" value="PRK05286.2-1"/>
    <property type="match status" value="1"/>
</dbReference>
<dbReference type="NCBIfam" id="NF003652">
    <property type="entry name" value="PRK05286.2-5"/>
    <property type="match status" value="1"/>
</dbReference>
<dbReference type="NCBIfam" id="TIGR01036">
    <property type="entry name" value="pyrD_sub2"/>
    <property type="match status" value="1"/>
</dbReference>
<dbReference type="PANTHER" id="PTHR48109:SF4">
    <property type="entry name" value="DIHYDROOROTATE DEHYDROGENASE (QUINONE), MITOCHONDRIAL"/>
    <property type="match status" value="1"/>
</dbReference>
<dbReference type="PANTHER" id="PTHR48109">
    <property type="entry name" value="DIHYDROOROTATE DEHYDROGENASE (QUINONE), MITOCHONDRIAL-RELATED"/>
    <property type="match status" value="1"/>
</dbReference>
<dbReference type="Pfam" id="PF01180">
    <property type="entry name" value="DHO_dh"/>
    <property type="match status" value="1"/>
</dbReference>
<dbReference type="SUPFAM" id="SSF51395">
    <property type="entry name" value="FMN-linked oxidoreductases"/>
    <property type="match status" value="1"/>
</dbReference>
<dbReference type="PROSITE" id="PS00911">
    <property type="entry name" value="DHODEHASE_1"/>
    <property type="match status" value="1"/>
</dbReference>
<dbReference type="PROSITE" id="PS00912">
    <property type="entry name" value="DHODEHASE_2"/>
    <property type="match status" value="1"/>
</dbReference>